<comment type="function">
    <text evidence="1">Specifically methylates the N7 position of guanine in position 527 of 16S rRNA.</text>
</comment>
<comment type="catalytic activity">
    <reaction evidence="1">
        <text>guanosine(527) in 16S rRNA + S-adenosyl-L-methionine = N(7)-methylguanosine(527) in 16S rRNA + S-adenosyl-L-homocysteine</text>
        <dbReference type="Rhea" id="RHEA:42732"/>
        <dbReference type="Rhea" id="RHEA-COMP:10209"/>
        <dbReference type="Rhea" id="RHEA-COMP:10210"/>
        <dbReference type="ChEBI" id="CHEBI:57856"/>
        <dbReference type="ChEBI" id="CHEBI:59789"/>
        <dbReference type="ChEBI" id="CHEBI:74269"/>
        <dbReference type="ChEBI" id="CHEBI:74480"/>
        <dbReference type="EC" id="2.1.1.170"/>
    </reaction>
</comment>
<comment type="subcellular location">
    <subcellularLocation>
        <location evidence="1">Cytoplasm</location>
    </subcellularLocation>
</comment>
<comment type="similarity">
    <text evidence="1">Belongs to the methyltransferase superfamily. RNA methyltransferase RsmG family.</text>
</comment>
<evidence type="ECO:0000255" key="1">
    <source>
        <dbReference type="HAMAP-Rule" id="MF_00074"/>
    </source>
</evidence>
<keyword id="KW-0963">Cytoplasm</keyword>
<keyword id="KW-0489">Methyltransferase</keyword>
<keyword id="KW-1185">Reference proteome</keyword>
<keyword id="KW-0698">rRNA processing</keyword>
<keyword id="KW-0949">S-adenosyl-L-methionine</keyword>
<keyword id="KW-0808">Transferase</keyword>
<name>RSMG_GLAP5</name>
<gene>
    <name evidence="1" type="primary">rsmG</name>
    <name type="ordered locus">HAPS_1518</name>
</gene>
<reference key="1">
    <citation type="journal article" date="2009" name="J. Bacteriol.">
        <title>Complete genome sequence of Haemophilus parasuis SH0165.</title>
        <authorList>
            <person name="Yue M."/>
            <person name="Yang F."/>
            <person name="Yang J."/>
            <person name="Bei W."/>
            <person name="Cai X."/>
            <person name="Chen L."/>
            <person name="Dong J."/>
            <person name="Zhou R."/>
            <person name="Jin M."/>
            <person name="Jin Q."/>
            <person name="Chen H."/>
        </authorList>
    </citation>
    <scope>NUCLEOTIDE SEQUENCE [LARGE SCALE GENOMIC DNA]</scope>
    <source>
        <strain>SH0165</strain>
    </source>
</reference>
<sequence>MLAKLDRLLSQANIPLTDQQKQQLVDFVKLLDKWNKAYNLTSVRNPDEMLVKHIMDSLVVSQHLQGQQFIDVGTGPGLPGIPLAIANPDKQFVLLDSLGKRITFIKNAIRELKLTNVTPVLSRVEEYQEQQFDGVLSRAFASLNDMVDWCYHLPNTSGHFYALKGQYQPEELAEVSKPIELVDVIKLNVPELVGERHLVVLNR</sequence>
<dbReference type="EC" id="2.1.1.170" evidence="1"/>
<dbReference type="EMBL" id="CP001321">
    <property type="protein sequence ID" value="ACL33074.1"/>
    <property type="molecule type" value="Genomic_DNA"/>
</dbReference>
<dbReference type="RefSeq" id="WP_010786419.1">
    <property type="nucleotide sequence ID" value="NC_011852.1"/>
</dbReference>
<dbReference type="SMR" id="B8F6X2"/>
<dbReference type="STRING" id="557723.HAPS_1518"/>
<dbReference type="KEGG" id="hap:HAPS_1518"/>
<dbReference type="PATRIC" id="fig|557723.8.peg.1490"/>
<dbReference type="HOGENOM" id="CLU_065341_2_2_6"/>
<dbReference type="Proteomes" id="UP000006743">
    <property type="component" value="Chromosome"/>
</dbReference>
<dbReference type="GO" id="GO:0005829">
    <property type="term" value="C:cytosol"/>
    <property type="evidence" value="ECO:0007669"/>
    <property type="project" value="TreeGrafter"/>
</dbReference>
<dbReference type="GO" id="GO:0070043">
    <property type="term" value="F:rRNA (guanine-N7-)-methyltransferase activity"/>
    <property type="evidence" value="ECO:0007669"/>
    <property type="project" value="UniProtKB-UniRule"/>
</dbReference>
<dbReference type="CDD" id="cd02440">
    <property type="entry name" value="AdoMet_MTases"/>
    <property type="match status" value="1"/>
</dbReference>
<dbReference type="FunFam" id="3.40.50.150:FF:000032">
    <property type="entry name" value="Ribosomal RNA small subunit methyltransferase G"/>
    <property type="match status" value="1"/>
</dbReference>
<dbReference type="Gene3D" id="3.40.50.150">
    <property type="entry name" value="Vaccinia Virus protein VP39"/>
    <property type="match status" value="1"/>
</dbReference>
<dbReference type="HAMAP" id="MF_00074">
    <property type="entry name" value="16SrRNA_methyltr_G"/>
    <property type="match status" value="1"/>
</dbReference>
<dbReference type="InterPro" id="IPR003682">
    <property type="entry name" value="rRNA_ssu_MeTfrase_G"/>
</dbReference>
<dbReference type="InterPro" id="IPR029063">
    <property type="entry name" value="SAM-dependent_MTases_sf"/>
</dbReference>
<dbReference type="NCBIfam" id="TIGR00138">
    <property type="entry name" value="rsmG_gidB"/>
    <property type="match status" value="1"/>
</dbReference>
<dbReference type="PANTHER" id="PTHR31760">
    <property type="entry name" value="S-ADENOSYL-L-METHIONINE-DEPENDENT METHYLTRANSFERASES SUPERFAMILY PROTEIN"/>
    <property type="match status" value="1"/>
</dbReference>
<dbReference type="PANTHER" id="PTHR31760:SF0">
    <property type="entry name" value="S-ADENOSYL-L-METHIONINE-DEPENDENT METHYLTRANSFERASES SUPERFAMILY PROTEIN"/>
    <property type="match status" value="1"/>
</dbReference>
<dbReference type="Pfam" id="PF02527">
    <property type="entry name" value="GidB"/>
    <property type="match status" value="1"/>
</dbReference>
<dbReference type="PIRSF" id="PIRSF003078">
    <property type="entry name" value="GidB"/>
    <property type="match status" value="1"/>
</dbReference>
<dbReference type="SUPFAM" id="SSF53335">
    <property type="entry name" value="S-adenosyl-L-methionine-dependent methyltransferases"/>
    <property type="match status" value="1"/>
</dbReference>
<proteinExistence type="inferred from homology"/>
<organism>
    <name type="scientific">Glaesserella parasuis serovar 5 (strain SH0165)</name>
    <name type="common">Haemophilus parasuis</name>
    <dbReference type="NCBI Taxonomy" id="557723"/>
    <lineage>
        <taxon>Bacteria</taxon>
        <taxon>Pseudomonadati</taxon>
        <taxon>Pseudomonadota</taxon>
        <taxon>Gammaproteobacteria</taxon>
        <taxon>Pasteurellales</taxon>
        <taxon>Pasteurellaceae</taxon>
        <taxon>Glaesserella</taxon>
    </lineage>
</organism>
<feature type="chain" id="PRO_1000118189" description="Ribosomal RNA small subunit methyltransferase G">
    <location>
        <begin position="1"/>
        <end position="203"/>
    </location>
</feature>
<feature type="binding site" evidence="1">
    <location>
        <position position="73"/>
    </location>
    <ligand>
        <name>S-adenosyl-L-methionine</name>
        <dbReference type="ChEBI" id="CHEBI:59789"/>
    </ligand>
</feature>
<feature type="binding site" evidence="1">
    <location>
        <position position="78"/>
    </location>
    <ligand>
        <name>S-adenosyl-L-methionine</name>
        <dbReference type="ChEBI" id="CHEBI:59789"/>
    </ligand>
</feature>
<feature type="binding site" evidence="1">
    <location>
        <begin position="124"/>
        <end position="125"/>
    </location>
    <ligand>
        <name>S-adenosyl-L-methionine</name>
        <dbReference type="ChEBI" id="CHEBI:59789"/>
    </ligand>
</feature>
<feature type="binding site" evidence="1">
    <location>
        <position position="138"/>
    </location>
    <ligand>
        <name>S-adenosyl-L-methionine</name>
        <dbReference type="ChEBI" id="CHEBI:59789"/>
    </ligand>
</feature>
<protein>
    <recommendedName>
        <fullName evidence="1">Ribosomal RNA small subunit methyltransferase G</fullName>
        <ecNumber evidence="1">2.1.1.170</ecNumber>
    </recommendedName>
    <alternativeName>
        <fullName evidence="1">16S rRNA 7-methylguanosine methyltransferase</fullName>
        <shortName evidence="1">16S rRNA m7G methyltransferase</shortName>
    </alternativeName>
</protein>
<accession>B8F6X2</accession>